<accession>Q07FI4</accession>
<organism>
    <name type="scientific">Influenza A virus (strain A/China:Nanchang/11/1996 H1N1)</name>
    <dbReference type="NCBI Taxonomy" id="394786"/>
    <lineage>
        <taxon>Viruses</taxon>
        <taxon>Riboviria</taxon>
        <taxon>Orthornavirae</taxon>
        <taxon>Negarnaviricota</taxon>
        <taxon>Polyploviricotina</taxon>
        <taxon>Insthoviricetes</taxon>
        <taxon>Articulavirales</taxon>
        <taxon>Orthomyxoviridae</taxon>
        <taxon>Alphainfluenzavirus</taxon>
        <taxon>Alphainfluenzavirus influenzae</taxon>
        <taxon>Influenza A virus</taxon>
    </lineage>
</organism>
<feature type="chain" id="PRO_0000372930" description="Matrix protein 2">
    <location>
        <begin position="1"/>
        <end position="97"/>
    </location>
</feature>
<feature type="topological domain" description="Virion surface" evidence="1">
    <location>
        <begin position="1"/>
        <end position="22"/>
    </location>
</feature>
<feature type="transmembrane region" description="Helical; Signal-anchor for type III membrane protein" evidence="1">
    <location>
        <begin position="23"/>
        <end position="43"/>
    </location>
</feature>
<feature type="topological domain" description="Intravirion" evidence="1">
    <location>
        <begin position="44"/>
        <end position="97"/>
    </location>
</feature>
<feature type="region of interest" description="Disordered" evidence="2">
    <location>
        <begin position="60"/>
        <end position="88"/>
    </location>
</feature>
<feature type="compositionally biased region" description="Basic and acidic residues" evidence="2">
    <location>
        <begin position="71"/>
        <end position="80"/>
    </location>
</feature>
<feature type="site" description="Essential for channel activity, possibly by being protonated during channel activation, and by forming the channel gate and the selective filter" evidence="1">
    <location>
        <position position="37"/>
    </location>
</feature>
<feature type="site" description="Seems to be involved in pH gating" evidence="1">
    <location>
        <position position="41"/>
    </location>
</feature>
<feature type="modified residue" description="Phosphoserine; by host" evidence="1">
    <location>
        <position position="64"/>
    </location>
</feature>
<feature type="modified residue" description="Phosphoserine; by host" evidence="1">
    <location>
        <position position="93"/>
    </location>
</feature>
<feature type="glycosylation site" description="N-linked (GlcNAc...) asparagine; by host" evidence="1">
    <location>
        <position position="20"/>
    </location>
</feature>
<feature type="disulfide bond" description="Interchain (with C-17)" evidence="1">
    <location>
        <position position="17"/>
    </location>
</feature>
<feature type="disulfide bond" description="Interchain (with C-19)" evidence="1">
    <location>
        <position position="19"/>
    </location>
</feature>
<protein>
    <recommendedName>
        <fullName evidence="1">Matrix protein 2</fullName>
    </recommendedName>
    <alternativeName>
        <fullName evidence="1">Proton channel protein M2</fullName>
    </alternativeName>
</protein>
<sequence length="97" mass="11059">MSLLTEVETPIRNEWGCRCNDSSDPLVVAASIIGIVHLILWIIDRLFSKSIYRIFKHGLKRGPSTEGVPESMREEYREEQQNAVDADDGHFVSIELE</sequence>
<evidence type="ECO:0000255" key="1">
    <source>
        <dbReference type="HAMAP-Rule" id="MF_04069"/>
    </source>
</evidence>
<evidence type="ECO:0000256" key="2">
    <source>
        <dbReference type="SAM" id="MobiDB-lite"/>
    </source>
</evidence>
<dbReference type="EMBL" id="CY016237">
    <property type="protein sequence ID" value="ABI95263.1"/>
    <property type="molecule type" value="Other_RNA"/>
</dbReference>
<dbReference type="SMR" id="Q07FI4"/>
<dbReference type="GlyCosmos" id="Q07FI4">
    <property type="glycosylation" value="1 site, No reported glycans"/>
</dbReference>
<dbReference type="Proteomes" id="UP000008586">
    <property type="component" value="Genome"/>
</dbReference>
<dbReference type="GO" id="GO:0020002">
    <property type="term" value="C:host cell plasma membrane"/>
    <property type="evidence" value="ECO:0007669"/>
    <property type="project" value="UniProtKB-SubCell"/>
</dbReference>
<dbReference type="GO" id="GO:0016020">
    <property type="term" value="C:membrane"/>
    <property type="evidence" value="ECO:0007669"/>
    <property type="project" value="UniProtKB-UniRule"/>
</dbReference>
<dbReference type="GO" id="GO:0055036">
    <property type="term" value="C:virion membrane"/>
    <property type="evidence" value="ECO:0007669"/>
    <property type="project" value="UniProtKB-SubCell"/>
</dbReference>
<dbReference type="GO" id="GO:0005216">
    <property type="term" value="F:monoatomic ion channel activity"/>
    <property type="evidence" value="ECO:0007669"/>
    <property type="project" value="UniProtKB-UniRule"/>
</dbReference>
<dbReference type="GO" id="GO:0015078">
    <property type="term" value="F:proton transmembrane transporter activity"/>
    <property type="evidence" value="ECO:0007669"/>
    <property type="project" value="UniProtKB-UniRule"/>
</dbReference>
<dbReference type="GO" id="GO:0051259">
    <property type="term" value="P:protein complex oligomerization"/>
    <property type="evidence" value="ECO:0007669"/>
    <property type="project" value="UniProtKB-UniRule"/>
</dbReference>
<dbReference type="GO" id="GO:0044694">
    <property type="term" value="P:symbiont genome entry into host cell via pore formation in plasma membrane"/>
    <property type="evidence" value="ECO:0007669"/>
    <property type="project" value="UniProtKB-UniRule"/>
</dbReference>
<dbReference type="GO" id="GO:0140321">
    <property type="term" value="P:symbiont-mediated suppression of host autophagy"/>
    <property type="evidence" value="ECO:0007669"/>
    <property type="project" value="UniProtKB-KW"/>
</dbReference>
<dbReference type="Gene3D" id="6.10.250.1640">
    <property type="match status" value="1"/>
</dbReference>
<dbReference type="HAMAP" id="MF_04069">
    <property type="entry name" value="INFV_M2"/>
    <property type="match status" value="1"/>
</dbReference>
<dbReference type="InterPro" id="IPR002089">
    <property type="entry name" value="Flu_M2"/>
</dbReference>
<dbReference type="Pfam" id="PF00599">
    <property type="entry name" value="Flu_M2"/>
    <property type="match status" value="1"/>
</dbReference>
<proteinExistence type="inferred from homology"/>
<gene>
    <name evidence="1" type="primary">M</name>
    <name type="synonym">M2</name>
</gene>
<name>M2_I96A3</name>
<reference key="1">
    <citation type="submission" date="2006-09" db="EMBL/GenBank/DDBJ databases">
        <title>The NIAID influenza genome sequencing project.</title>
        <authorList>
            <person name="Ghedin E."/>
            <person name="Spiro D."/>
            <person name="Miller N."/>
            <person name="Zaborsky J."/>
            <person name="Feldblyum T."/>
            <person name="Subbu V."/>
            <person name="Shumway M."/>
            <person name="Sparenborg J."/>
            <person name="Groveman L."/>
            <person name="Halpin R."/>
            <person name="Sitz J."/>
            <person name="Koo H."/>
            <person name="Salzberg S.L."/>
            <person name="Webster R.G."/>
            <person name="Hoffmann E."/>
            <person name="Krauss S."/>
            <person name="Naeve C."/>
            <person name="Bao Y."/>
            <person name="Bolotov P."/>
            <person name="Dernovoy D."/>
            <person name="Kiryutin B."/>
            <person name="Lipman D.J."/>
            <person name="Tatusova T."/>
        </authorList>
    </citation>
    <scope>NUCLEOTIDE SEQUENCE [GENOMIC RNA]</scope>
</reference>
<reference key="2">
    <citation type="submission" date="2006-09" db="EMBL/GenBank/DDBJ databases">
        <authorList>
            <consortium name="The NIAID Influenza Genome Sequencing Consortium"/>
        </authorList>
    </citation>
    <scope>NUCLEOTIDE SEQUENCE [GENOMIC RNA]</scope>
</reference>
<keyword id="KW-0025">Alternative splicing</keyword>
<keyword id="KW-1015">Disulfide bond</keyword>
<keyword id="KW-0325">Glycoprotein</keyword>
<keyword id="KW-1032">Host cell membrane</keyword>
<keyword id="KW-1043">Host membrane</keyword>
<keyword id="KW-0945">Host-virus interaction</keyword>
<keyword id="KW-0375">Hydrogen ion transport</keyword>
<keyword id="KW-1083">Inhibition of host autophagy by virus</keyword>
<keyword id="KW-0407">Ion channel</keyword>
<keyword id="KW-0406">Ion transport</keyword>
<keyword id="KW-0449">Lipoprotein</keyword>
<keyword id="KW-0472">Membrane</keyword>
<keyword id="KW-0564">Palmitate</keyword>
<keyword id="KW-0597">Phosphoprotein</keyword>
<keyword id="KW-0735">Signal-anchor</keyword>
<keyword id="KW-0812">Transmembrane</keyword>
<keyword id="KW-1133">Transmembrane helix</keyword>
<keyword id="KW-0813">Transport</keyword>
<keyword id="KW-1182">Viral ion channel</keyword>
<keyword id="KW-0946">Virion</keyword>
<organismHost>
    <name type="scientific">Aves</name>
    <dbReference type="NCBI Taxonomy" id="8782"/>
</organismHost>
<organismHost>
    <name type="scientific">Homo sapiens</name>
    <name type="common">Human</name>
    <dbReference type="NCBI Taxonomy" id="9606"/>
</organismHost>
<organismHost>
    <name type="scientific">Sus scrofa</name>
    <name type="common">Pig</name>
    <dbReference type="NCBI Taxonomy" id="9823"/>
</organismHost>
<comment type="function">
    <text evidence="1">Forms a proton-selective ion channel that is necessary for the efficient release of the viral genome during virus entry. After attaching to the cell surface, the virion enters the cell by endocytosis. Acidification of the endosome triggers M2 ion channel activity. The influx of protons into virion interior is believed to disrupt interactions between the viral ribonucleoprotein (RNP), matrix protein 1 (M1), and lipid bilayers, thereby freeing the viral genome from interaction with viral proteins and enabling RNA segments to migrate to the host cell nucleus, where influenza virus RNA transcription and replication occur. Also plays a role in viral proteins secretory pathway. Elevates the intravesicular pH of normally acidic compartments, such as trans-Golgi network, preventing newly formed hemagglutinin from premature switching to the fusion-active conformation.</text>
</comment>
<comment type="activity regulation">
    <text>The M2 protein from most influenza A strains is inhibited by amantadine and rimantadine, resulting in viral uncoating incapacity. Emergence of amantadine-resistant variants is usually rapid.</text>
</comment>
<comment type="subunit">
    <text evidence="1">Homotetramer; composed of two disulfide-linked dimers held together by non-covalent interactions. May interact with matrix protein 1.</text>
</comment>
<comment type="subcellular location">
    <subcellularLocation>
        <location evidence="1">Virion membrane</location>
    </subcellularLocation>
    <subcellularLocation>
        <location evidence="1">Host apical cell membrane</location>
        <topology evidence="1">Single-pass type III membrane protein</topology>
    </subcellularLocation>
    <text evidence="1">Abundantly expressed at the apical plasma membrane in infected polarized epithelial cells, in close proximity to budding and assembled virions. Minor component of virions (only 16-20 molecules/virion).</text>
</comment>
<comment type="alternative products">
    <event type="alternative splicing"/>
    <isoform>
        <id>Q07FI4-1</id>
        <name>M2</name>
        <sequence type="displayed"/>
    </isoform>
    <isoform>
        <id>Q07FI3-1</id>
        <name>M1</name>
        <sequence type="external"/>
    </isoform>
    <text>Only the first 9 residues are shared by the 2 isoforms.</text>
</comment>
<comment type="domain">
    <text evidence="1">Cytoplasmic tail plays an important role in virion assembly and morphogenesis.</text>
</comment>
<comment type="miscellaneous">
    <text evidence="1">When the channel is activated, one or more imidazole moieties of His-37 probably become bi-protonated.</text>
</comment>
<comment type="similarity">
    <text evidence="1">Belongs to the influenza viruses matrix protein M2 family.</text>
</comment>